<dbReference type="EMBL" id="AE014075">
    <property type="protein sequence ID" value="AAN83289.1"/>
    <property type="status" value="ALT_INIT"/>
    <property type="molecule type" value="Genomic_DNA"/>
</dbReference>
<dbReference type="RefSeq" id="WP_001166063.1">
    <property type="nucleotide sequence ID" value="NZ_CP051263.1"/>
</dbReference>
<dbReference type="STRING" id="199310.c4861"/>
<dbReference type="GeneID" id="75204583"/>
<dbReference type="KEGG" id="ecc:c4861"/>
<dbReference type="eggNOG" id="ENOG502Z7JT">
    <property type="taxonomic scope" value="Bacteria"/>
</dbReference>
<dbReference type="HOGENOM" id="CLU_057476_0_1_6"/>
<dbReference type="Proteomes" id="UP000001410">
    <property type="component" value="Chromosome"/>
</dbReference>
<dbReference type="GO" id="GO:0005886">
    <property type="term" value="C:plasma membrane"/>
    <property type="evidence" value="ECO:0007669"/>
    <property type="project" value="UniProtKB-SubCell"/>
</dbReference>
<dbReference type="GO" id="GO:0015649">
    <property type="term" value="F:2-keto-3-deoxygluconate:proton symporter activity"/>
    <property type="evidence" value="ECO:0007669"/>
    <property type="project" value="UniProtKB-UniRule"/>
</dbReference>
<dbReference type="HAMAP" id="MF_00070">
    <property type="entry name" value="KdgT"/>
    <property type="match status" value="1"/>
</dbReference>
<dbReference type="InterPro" id="IPR004684">
    <property type="entry name" value="2keto-3dGluconate_permease"/>
</dbReference>
<dbReference type="InterPro" id="IPR018395">
    <property type="entry name" value="2keto-3dGluconate_permease_sub"/>
</dbReference>
<dbReference type="NCBIfam" id="TIGR00793">
    <property type="entry name" value="kdgT"/>
    <property type="match status" value="1"/>
</dbReference>
<dbReference type="Pfam" id="PF03812">
    <property type="entry name" value="KdgT"/>
    <property type="match status" value="1"/>
</dbReference>
<gene>
    <name evidence="1" type="primary">kdgT</name>
    <name type="ordered locus">c4861</name>
</gene>
<evidence type="ECO:0000255" key="1">
    <source>
        <dbReference type="HAMAP-Rule" id="MF_00070"/>
    </source>
</evidence>
<evidence type="ECO:0000305" key="2"/>
<proteinExistence type="inferred from homology"/>
<accession>P0A713</accession>
<accession>P32172</accession>
<keyword id="KW-0997">Cell inner membrane</keyword>
<keyword id="KW-1003">Cell membrane</keyword>
<keyword id="KW-0472">Membrane</keyword>
<keyword id="KW-1185">Reference proteome</keyword>
<keyword id="KW-0762">Sugar transport</keyword>
<keyword id="KW-0769">Symport</keyword>
<keyword id="KW-0812">Transmembrane</keyword>
<keyword id="KW-1133">Transmembrane helix</keyword>
<keyword id="KW-0813">Transport</keyword>
<feature type="chain" id="PRO_0000209677" description="2-keto-3-deoxygluconate permease">
    <location>
        <begin position="1"/>
        <end position="327"/>
    </location>
</feature>
<feature type="transmembrane region" description="Helical" evidence="1">
    <location>
        <begin position="10"/>
        <end position="30"/>
    </location>
</feature>
<feature type="transmembrane region" description="Helical" evidence="1">
    <location>
        <begin position="42"/>
        <end position="62"/>
    </location>
</feature>
<feature type="transmembrane region" description="Helical" evidence="1">
    <location>
        <begin position="73"/>
        <end position="93"/>
    </location>
</feature>
<feature type="transmembrane region" description="Helical" evidence="1">
    <location>
        <begin position="95"/>
        <end position="115"/>
    </location>
</feature>
<feature type="transmembrane region" description="Helical" evidence="1">
    <location>
        <begin position="139"/>
        <end position="159"/>
    </location>
</feature>
<feature type="transmembrane region" description="Helical" evidence="1">
    <location>
        <begin position="163"/>
        <end position="183"/>
    </location>
</feature>
<feature type="transmembrane region" description="Helical" evidence="1">
    <location>
        <begin position="199"/>
        <end position="219"/>
    </location>
</feature>
<feature type="transmembrane region" description="Helical" evidence="1">
    <location>
        <begin position="224"/>
        <end position="244"/>
    </location>
</feature>
<feature type="transmembrane region" description="Helical" evidence="1">
    <location>
        <begin position="254"/>
        <end position="274"/>
    </location>
</feature>
<feature type="transmembrane region" description="Helical" evidence="1">
    <location>
        <begin position="289"/>
        <end position="309"/>
    </location>
</feature>
<organism>
    <name type="scientific">Escherichia coli O6:H1 (strain CFT073 / ATCC 700928 / UPEC)</name>
    <dbReference type="NCBI Taxonomy" id="199310"/>
    <lineage>
        <taxon>Bacteria</taxon>
        <taxon>Pseudomonadati</taxon>
        <taxon>Pseudomonadota</taxon>
        <taxon>Gammaproteobacteria</taxon>
        <taxon>Enterobacterales</taxon>
        <taxon>Enterobacteriaceae</taxon>
        <taxon>Escherichia</taxon>
    </lineage>
</organism>
<sequence>MQIKRSIEKIPGGMMLVPLFLGALCHTFSPGAGKYFGSFTNGMITGTVPILAVWFFCMGASIKLSATGTVLRKSGTLVVTKIAVAWVVAAIASRIIPEHGVEVGFFAGLSTLALVAAMDMTNGGLYASIMQQYGTKEEAGAFVLMSLESGPLMTMIILGTAGIASFEPHVFVGAVLPFLVGFALGNLDPELREFFSKAVQTLIPFFAFALGNTIDLTVIAQTGLLGILLGVAVIIVTGIPLIIADKLIGGGDGTAGIAASSSAGAAVATPVLIAEMVPAFKPMAPAATSLVATAVIVTSILVPILTSIWSRKVKARAAKIEILGTVK</sequence>
<protein>
    <recommendedName>
        <fullName evidence="1">2-keto-3-deoxygluconate permease</fullName>
        <shortName evidence="1">KDG permease</shortName>
    </recommendedName>
</protein>
<comment type="function">
    <text evidence="1">Catalyzes the proton-dependent uptake of 2-keto-3-deoxygluconate (KDG) into the cell.</text>
</comment>
<comment type="catalytic activity">
    <reaction evidence="1">
        <text>2-dehydro-3-deoxy-D-gluconate(in) + H(+)(in) = 2-dehydro-3-deoxy-D-gluconate(out) + H(+)(out)</text>
        <dbReference type="Rhea" id="RHEA:29943"/>
        <dbReference type="ChEBI" id="CHEBI:15378"/>
        <dbReference type="ChEBI" id="CHEBI:57990"/>
    </reaction>
    <physiologicalReaction direction="right-to-left" evidence="1">
        <dbReference type="Rhea" id="RHEA:29945"/>
    </physiologicalReaction>
</comment>
<comment type="subcellular location">
    <subcellularLocation>
        <location evidence="1">Cell inner membrane</location>
        <topology evidence="1">Multi-pass membrane protein</topology>
    </subcellularLocation>
</comment>
<comment type="similarity">
    <text evidence="1 2">Belongs to the KdgT transporter family.</text>
</comment>
<comment type="sequence caution" evidence="2">
    <conflict type="erroneous initiation">
        <sequence resource="EMBL-CDS" id="AAN83289"/>
    </conflict>
</comment>
<name>KDGT_ECOL6</name>
<reference key="1">
    <citation type="journal article" date="2002" name="Proc. Natl. Acad. Sci. U.S.A.">
        <title>Extensive mosaic structure revealed by the complete genome sequence of uropathogenic Escherichia coli.</title>
        <authorList>
            <person name="Welch R.A."/>
            <person name="Burland V."/>
            <person name="Plunkett G. III"/>
            <person name="Redford P."/>
            <person name="Roesch P."/>
            <person name="Rasko D."/>
            <person name="Buckles E.L."/>
            <person name="Liou S.-R."/>
            <person name="Boutin A."/>
            <person name="Hackett J."/>
            <person name="Stroud D."/>
            <person name="Mayhew G.F."/>
            <person name="Rose D.J."/>
            <person name="Zhou S."/>
            <person name="Schwartz D.C."/>
            <person name="Perna N.T."/>
            <person name="Mobley H.L.T."/>
            <person name="Donnenberg M.S."/>
            <person name="Blattner F.R."/>
        </authorList>
    </citation>
    <scope>NUCLEOTIDE SEQUENCE [LARGE SCALE GENOMIC DNA]</scope>
    <source>
        <strain>CFT073 / ATCC 700928 / UPEC</strain>
    </source>
</reference>